<proteinExistence type="evidence at protein level"/>
<evidence type="ECO:0000255" key="1"/>
<evidence type="ECO:0000269" key="2">
    <source>
    </source>
</evidence>
<evidence type="ECO:0000269" key="3">
    <source>
    </source>
</evidence>
<evidence type="ECO:0000269" key="4">
    <source>
    </source>
</evidence>
<evidence type="ECO:0000269" key="5">
    <source>
    </source>
</evidence>
<evidence type="ECO:0000269" key="6">
    <source>
    </source>
</evidence>
<evidence type="ECO:0000305" key="7"/>
<evidence type="ECO:0007829" key="8">
    <source>
        <dbReference type="PDB" id="2BZ0"/>
    </source>
</evidence>
<evidence type="ECO:0007829" key="9">
    <source>
        <dbReference type="PDB" id="2BZ1"/>
    </source>
</evidence>
<dbReference type="EC" id="3.5.4.25" evidence="6"/>
<dbReference type="EMBL" id="X67876">
    <property type="protein sequence ID" value="CAA48075.1"/>
    <property type="molecule type" value="Genomic_DNA"/>
</dbReference>
<dbReference type="EMBL" id="U00096">
    <property type="protein sequence ID" value="AAC74359.1"/>
    <property type="molecule type" value="Genomic_DNA"/>
</dbReference>
<dbReference type="EMBL" id="AP009048">
    <property type="protein sequence ID" value="BAA14831.1"/>
    <property type="molecule type" value="Genomic_DNA"/>
</dbReference>
<dbReference type="EMBL" id="X60293">
    <property type="protein sequence ID" value="CAA42835.1"/>
    <property type="molecule type" value="Genomic_DNA"/>
</dbReference>
<dbReference type="PIR" id="A40654">
    <property type="entry name" value="A40654"/>
</dbReference>
<dbReference type="RefSeq" id="NP_415793.1">
    <property type="nucleotide sequence ID" value="NC_000913.3"/>
</dbReference>
<dbReference type="RefSeq" id="WP_001176295.1">
    <property type="nucleotide sequence ID" value="NZ_STEB01000005.1"/>
</dbReference>
<dbReference type="PDB" id="2BZ0">
    <property type="method" value="X-ray"/>
    <property type="resolution" value="2.60 A"/>
    <property type="chains" value="A/B=1-196"/>
</dbReference>
<dbReference type="PDB" id="2BZ1">
    <property type="method" value="X-ray"/>
    <property type="resolution" value="1.54 A"/>
    <property type="chains" value="A=1-196"/>
</dbReference>
<dbReference type="PDBsum" id="2BZ0"/>
<dbReference type="PDBsum" id="2BZ1"/>
<dbReference type="SMR" id="P0A7I7"/>
<dbReference type="BioGRID" id="4263359">
    <property type="interactions" value="49"/>
</dbReference>
<dbReference type="DIP" id="DIP-36049N"/>
<dbReference type="FunCoup" id="P0A7I7">
    <property type="interactions" value="235"/>
</dbReference>
<dbReference type="IntAct" id="P0A7I7">
    <property type="interactions" value="2"/>
</dbReference>
<dbReference type="STRING" id="511145.b1277"/>
<dbReference type="jPOST" id="P0A7I7"/>
<dbReference type="PaxDb" id="511145-b1277"/>
<dbReference type="EnsemblBacteria" id="AAC74359">
    <property type="protein sequence ID" value="AAC74359"/>
    <property type="gene ID" value="b1277"/>
</dbReference>
<dbReference type="GeneID" id="86946614"/>
<dbReference type="GeneID" id="945763"/>
<dbReference type="KEGG" id="ecj:JW1269"/>
<dbReference type="KEGG" id="eco:b1277"/>
<dbReference type="KEGG" id="ecoc:C3026_07500"/>
<dbReference type="PATRIC" id="fig|1411691.4.peg.1004"/>
<dbReference type="EchoBASE" id="EB1307"/>
<dbReference type="eggNOG" id="COG0807">
    <property type="taxonomic scope" value="Bacteria"/>
</dbReference>
<dbReference type="HOGENOM" id="CLU_020273_2_1_6"/>
<dbReference type="InParanoid" id="P0A7I7"/>
<dbReference type="OMA" id="CRDQLEA"/>
<dbReference type="OrthoDB" id="9793111at2"/>
<dbReference type="PhylomeDB" id="P0A7I7"/>
<dbReference type="BioCyc" id="EcoCyc:GTP-CYCLOHYDRO-II-MONOMER"/>
<dbReference type="BioCyc" id="MetaCyc:GTP-CYCLOHYDRO-II-MONOMER"/>
<dbReference type="BRENDA" id="3.5.4.25">
    <property type="organism ID" value="2026"/>
</dbReference>
<dbReference type="SABIO-RK" id="P0A7I7"/>
<dbReference type="UniPathway" id="UPA00275">
    <property type="reaction ID" value="UER00400"/>
</dbReference>
<dbReference type="EvolutionaryTrace" id="P0A7I7"/>
<dbReference type="PRO" id="PR:P0A7I7"/>
<dbReference type="Proteomes" id="UP000000625">
    <property type="component" value="Chromosome"/>
</dbReference>
<dbReference type="GO" id="GO:0005829">
    <property type="term" value="C:cytosol"/>
    <property type="evidence" value="ECO:0000318"/>
    <property type="project" value="GO_Central"/>
</dbReference>
<dbReference type="GO" id="GO:0005525">
    <property type="term" value="F:GTP binding"/>
    <property type="evidence" value="ECO:0007669"/>
    <property type="project" value="UniProtKB-KW"/>
</dbReference>
<dbReference type="GO" id="GO:0003935">
    <property type="term" value="F:GTP cyclohydrolase II activity"/>
    <property type="evidence" value="ECO:0000314"/>
    <property type="project" value="EcoCyc"/>
</dbReference>
<dbReference type="GO" id="GO:0000287">
    <property type="term" value="F:magnesium ion binding"/>
    <property type="evidence" value="ECO:0000314"/>
    <property type="project" value="EcoCyc"/>
</dbReference>
<dbReference type="GO" id="GO:0042803">
    <property type="term" value="F:protein homodimerization activity"/>
    <property type="evidence" value="ECO:0000314"/>
    <property type="project" value="EcoCyc"/>
</dbReference>
<dbReference type="GO" id="GO:0008270">
    <property type="term" value="F:zinc ion binding"/>
    <property type="evidence" value="ECO:0000314"/>
    <property type="project" value="EcoCyc"/>
</dbReference>
<dbReference type="GO" id="GO:0009231">
    <property type="term" value="P:riboflavin biosynthetic process"/>
    <property type="evidence" value="ECO:0000315"/>
    <property type="project" value="EcoCyc"/>
</dbReference>
<dbReference type="CDD" id="cd00641">
    <property type="entry name" value="GTP_cyclohydro2"/>
    <property type="match status" value="1"/>
</dbReference>
<dbReference type="FunFam" id="3.40.50.10990:FF:000002">
    <property type="entry name" value="GTP cyclohydrolase-2"/>
    <property type="match status" value="1"/>
</dbReference>
<dbReference type="Gene3D" id="3.40.50.10990">
    <property type="entry name" value="GTP cyclohydrolase II"/>
    <property type="match status" value="1"/>
</dbReference>
<dbReference type="HAMAP" id="MF_00179">
    <property type="entry name" value="RibA"/>
    <property type="match status" value="1"/>
</dbReference>
<dbReference type="InterPro" id="IPR032677">
    <property type="entry name" value="GTP_cyclohydro_II"/>
</dbReference>
<dbReference type="InterPro" id="IPR000926">
    <property type="entry name" value="RibA"/>
</dbReference>
<dbReference type="InterPro" id="IPR036144">
    <property type="entry name" value="RibA-like_sf"/>
</dbReference>
<dbReference type="NCBIfam" id="NF001591">
    <property type="entry name" value="PRK00393.1"/>
    <property type="match status" value="1"/>
</dbReference>
<dbReference type="NCBIfam" id="TIGR00505">
    <property type="entry name" value="ribA"/>
    <property type="match status" value="1"/>
</dbReference>
<dbReference type="PANTHER" id="PTHR21327:SF18">
    <property type="entry name" value="3,4-DIHYDROXY-2-BUTANONE 4-PHOSPHATE SYNTHASE"/>
    <property type="match status" value="1"/>
</dbReference>
<dbReference type="PANTHER" id="PTHR21327">
    <property type="entry name" value="GTP CYCLOHYDROLASE II-RELATED"/>
    <property type="match status" value="1"/>
</dbReference>
<dbReference type="Pfam" id="PF00925">
    <property type="entry name" value="GTP_cyclohydro2"/>
    <property type="match status" value="1"/>
</dbReference>
<dbReference type="SUPFAM" id="SSF142695">
    <property type="entry name" value="RibA-like"/>
    <property type="match status" value="1"/>
</dbReference>
<name>RIBA_ECOLI</name>
<feature type="chain" id="PRO_0000151754" description="GTP cyclohydrolase-2">
    <location>
        <begin position="1"/>
        <end position="196"/>
    </location>
</feature>
<feature type="active site" description="Proton acceptor" evidence="1">
    <location>
        <position position="126"/>
    </location>
</feature>
<feature type="active site" description="Nucleophile">
    <location>
        <position position="128"/>
    </location>
</feature>
<feature type="binding site">
    <location>
        <begin position="49"/>
        <end position="53"/>
    </location>
    <ligand>
        <name>GTP</name>
        <dbReference type="ChEBI" id="CHEBI:37565"/>
    </ligand>
</feature>
<feature type="binding site">
    <location>
        <position position="54"/>
    </location>
    <ligand>
        <name>Zn(2+)</name>
        <dbReference type="ChEBI" id="CHEBI:29105"/>
        <note>catalytic</note>
    </ligand>
</feature>
<feature type="binding site">
    <location>
        <position position="65"/>
    </location>
    <ligand>
        <name>Zn(2+)</name>
        <dbReference type="ChEBI" id="CHEBI:29105"/>
        <note>catalytic</note>
    </ligand>
</feature>
<feature type="binding site">
    <location>
        <position position="67"/>
    </location>
    <ligand>
        <name>Zn(2+)</name>
        <dbReference type="ChEBI" id="CHEBI:29105"/>
        <note>catalytic</note>
    </ligand>
</feature>
<feature type="binding site">
    <location>
        <position position="70"/>
    </location>
    <ligand>
        <name>GTP</name>
        <dbReference type="ChEBI" id="CHEBI:37565"/>
    </ligand>
</feature>
<feature type="binding site">
    <location>
        <begin position="92"/>
        <end position="94"/>
    </location>
    <ligand>
        <name>GTP</name>
        <dbReference type="ChEBI" id="CHEBI:37565"/>
    </ligand>
</feature>
<feature type="binding site">
    <location>
        <position position="114"/>
    </location>
    <ligand>
        <name>GTP</name>
        <dbReference type="ChEBI" id="CHEBI:37565"/>
    </ligand>
</feature>
<feature type="binding site">
    <location>
        <position position="149"/>
    </location>
    <ligand>
        <name>GTP</name>
        <dbReference type="ChEBI" id="CHEBI:37565"/>
    </ligand>
</feature>
<feature type="binding site">
    <location>
        <position position="154"/>
    </location>
    <ligand>
        <name>GTP</name>
        <dbReference type="ChEBI" id="CHEBI:37565"/>
    </ligand>
</feature>
<feature type="mutagenesis site" description="Loss of zinc binding. Loss of ring-opening activity. Can still remove phosphate from GTP." evidence="3">
    <original>C</original>
    <variation>S</variation>
    <location>
        <position position="54"/>
    </location>
</feature>
<feature type="mutagenesis site" description="Loss of zinc binding. Loss of ring-opening activity. Can still remove phosphate from GTP." evidence="3">
    <original>C</original>
    <variation>S</variation>
    <location>
        <position position="65"/>
    </location>
</feature>
<feature type="mutagenesis site" description="Loss of zinc binding. Loss of ring-opening activity. Can still remove phosphate from GTP." evidence="3">
    <original>C</original>
    <variation>S</variation>
    <location>
        <position position="67"/>
    </location>
</feature>
<feature type="strand" evidence="9">
    <location>
        <begin position="3"/>
        <end position="13"/>
    </location>
</feature>
<feature type="strand" evidence="9">
    <location>
        <begin position="16"/>
        <end position="25"/>
    </location>
</feature>
<feature type="turn" evidence="9">
    <location>
        <begin position="26"/>
        <end position="28"/>
    </location>
</feature>
<feature type="strand" evidence="9">
    <location>
        <begin position="31"/>
        <end position="38"/>
    </location>
</feature>
<feature type="strand" evidence="9">
    <location>
        <begin position="42"/>
        <end position="44"/>
    </location>
</feature>
<feature type="strand" evidence="9">
    <location>
        <begin position="46"/>
        <end position="52"/>
    </location>
</feature>
<feature type="helix" evidence="9">
    <location>
        <begin position="55"/>
        <end position="58"/>
    </location>
</feature>
<feature type="strand" evidence="8">
    <location>
        <begin position="63"/>
        <end position="66"/>
    </location>
</feature>
<feature type="helix" evidence="9">
    <location>
        <begin position="67"/>
        <end position="81"/>
    </location>
</feature>
<feature type="strand" evidence="9">
    <location>
        <begin position="83"/>
        <end position="89"/>
    </location>
</feature>
<feature type="helix" evidence="9">
    <location>
        <begin position="92"/>
        <end position="95"/>
    </location>
</feature>
<feature type="helix" evidence="9">
    <location>
        <begin position="98"/>
        <end position="109"/>
    </location>
</feature>
<feature type="helix" evidence="9">
    <location>
        <begin position="114"/>
        <end position="120"/>
    </location>
</feature>
<feature type="helix" evidence="9">
    <location>
        <begin position="131"/>
        <end position="139"/>
    </location>
</feature>
<feature type="strand" evidence="9">
    <location>
        <begin position="144"/>
        <end position="148"/>
    </location>
</feature>
<feature type="helix" evidence="9">
    <location>
        <begin position="152"/>
        <end position="160"/>
    </location>
</feature>
<feature type="strand" evidence="9">
    <location>
        <begin position="165"/>
        <end position="169"/>
    </location>
</feature>
<reference key="1">
    <citation type="journal article" date="1993" name="J. Bacteriol.">
        <title>Biosynthesis of riboflavin: cloning, sequencing, mapping, and expression of the gene coding for GTP cyclohydrolase II in Escherichia coli.</title>
        <authorList>
            <person name="Richter G."/>
            <person name="Ritz H."/>
            <person name="Katzenmeier G."/>
            <person name="Volk R."/>
            <person name="Kohnle A."/>
            <person name="Lottspeich F."/>
            <person name="Allendorf D."/>
            <person name="Bacher A."/>
        </authorList>
    </citation>
    <scope>NUCLEOTIDE SEQUENCE [GENOMIC DNA]</scope>
    <scope>PROTEIN SEQUENCE OF 1-13</scope>
    <scope>CATALYTIC ACTIVITY</scope>
    <source>
        <strain>K12</strain>
    </source>
</reference>
<reference key="2">
    <citation type="journal article" date="1996" name="DNA Res.">
        <title>A 570-kb DNA sequence of the Escherichia coli K-12 genome corresponding to the 28.0-40.1 min region on the linkage map.</title>
        <authorList>
            <person name="Aiba H."/>
            <person name="Baba T."/>
            <person name="Fujita K."/>
            <person name="Hayashi K."/>
            <person name="Inada T."/>
            <person name="Isono K."/>
            <person name="Itoh T."/>
            <person name="Kasai H."/>
            <person name="Kashimoto K."/>
            <person name="Kimura S."/>
            <person name="Kitakawa M."/>
            <person name="Kitagawa M."/>
            <person name="Makino K."/>
            <person name="Miki T."/>
            <person name="Mizobuchi K."/>
            <person name="Mori H."/>
            <person name="Mori T."/>
            <person name="Motomura K."/>
            <person name="Nakade S."/>
            <person name="Nakamura Y."/>
            <person name="Nashimoto H."/>
            <person name="Nishio Y."/>
            <person name="Oshima T."/>
            <person name="Saito N."/>
            <person name="Sampei G."/>
            <person name="Seki Y."/>
            <person name="Sivasundaram S."/>
            <person name="Tagami H."/>
            <person name="Takeda J."/>
            <person name="Takemoto K."/>
            <person name="Takeuchi Y."/>
            <person name="Wada C."/>
            <person name="Yamamoto Y."/>
            <person name="Horiuchi T."/>
        </authorList>
    </citation>
    <scope>NUCLEOTIDE SEQUENCE [LARGE SCALE GENOMIC DNA]</scope>
    <source>
        <strain>K12 / W3110 / ATCC 27325 / DSM 5911</strain>
    </source>
</reference>
<reference key="3">
    <citation type="journal article" date="1997" name="Science">
        <title>The complete genome sequence of Escherichia coli K-12.</title>
        <authorList>
            <person name="Blattner F.R."/>
            <person name="Plunkett G. III"/>
            <person name="Bloch C.A."/>
            <person name="Perna N.T."/>
            <person name="Burland V."/>
            <person name="Riley M."/>
            <person name="Collado-Vides J."/>
            <person name="Glasner J.D."/>
            <person name="Rode C.K."/>
            <person name="Mayhew G.F."/>
            <person name="Gregor J."/>
            <person name="Davis N.W."/>
            <person name="Kirkpatrick H.A."/>
            <person name="Goeden M.A."/>
            <person name="Rose D.J."/>
            <person name="Mau B."/>
            <person name="Shao Y."/>
        </authorList>
    </citation>
    <scope>NUCLEOTIDE SEQUENCE [LARGE SCALE GENOMIC DNA]</scope>
    <source>
        <strain>K12 / MG1655 / ATCC 47076</strain>
    </source>
</reference>
<reference key="4">
    <citation type="journal article" date="2006" name="Mol. Syst. Biol.">
        <title>Highly accurate genome sequences of Escherichia coli K-12 strains MG1655 and W3110.</title>
        <authorList>
            <person name="Hayashi K."/>
            <person name="Morooka N."/>
            <person name="Yamamoto Y."/>
            <person name="Fujita K."/>
            <person name="Isono K."/>
            <person name="Choi S."/>
            <person name="Ohtsubo E."/>
            <person name="Baba T."/>
            <person name="Wanner B.L."/>
            <person name="Mori H."/>
            <person name="Horiuchi T."/>
        </authorList>
    </citation>
    <scope>NUCLEOTIDE SEQUENCE [LARGE SCALE GENOMIC DNA]</scope>
    <source>
        <strain>K12 / W3110 / ATCC 27325 / DSM 5911</strain>
    </source>
</reference>
<reference key="5">
    <citation type="journal article" date="1992" name="Eur. J. Biochem.">
        <title>The aconitase of Escherichia coli. Nucleotide sequence of the aconitase gene and amino acid sequence similarity with mitochondrial aconitases, the iron-responsive-element-binding protein and isopropylmalate isomerases.</title>
        <authorList>
            <person name="Prodromou C."/>
            <person name="Artymiuk P.J."/>
            <person name="Guest J.R."/>
        </authorList>
    </citation>
    <scope>NUCLEOTIDE SEQUENCE [GENOMIC DNA] OF 107-196</scope>
</reference>
<reference key="6">
    <citation type="journal article" date="1975" name="J. Biol. Chem.">
        <title>Purification and properties of guanosine triphosphate cyclohydrolase II from Escherichia coli.</title>
        <authorList>
            <person name="Foor F."/>
            <person name="Brown G.M."/>
        </authorList>
    </citation>
    <scope>FUNCTION</scope>
    <scope>BIOPHYSICOCHEMICAL PROPERTIES</scope>
    <scope>SUBUNIT</scope>
    <scope>ACTIVITY REGULATION</scope>
    <scope>COFACTOR</scope>
</reference>
<reference key="7">
    <citation type="journal article" date="2001" name="J. Biol. Chem.">
        <title>Biosynthesis of riboflavin: studies on the mechanism of GTP cyclohydrolase II.</title>
        <authorList>
            <person name="Ritz H."/>
            <person name="Schramek N."/>
            <person name="Bracher A."/>
            <person name="Herz S."/>
            <person name="Eisenreich W."/>
            <person name="Richter G."/>
            <person name="Bacher A."/>
        </authorList>
    </citation>
    <scope>ENZYME MECHANISM</scope>
    <scope>ACTIVITY REGULATION</scope>
</reference>
<reference key="8">
    <citation type="journal article" date="2002" name="Eur. J. Biochem.">
        <title>Biosynthesis of vitamin B2.</title>
        <authorList>
            <person name="Kaiser J."/>
            <person name="Schramek N."/>
            <person name="Eberhardt S."/>
            <person name="Puettmer S."/>
            <person name="Schuster M."/>
            <person name="Bacher A."/>
        </authorList>
    </citation>
    <scope>COFACTOR</scope>
    <scope>MUTAGENESIS OF CYS-54; CYS-65 AND CYS-67</scope>
</reference>
<reference key="9">
    <citation type="journal article" date="2005" name="J. Biol. Chem.">
        <title>GTP cyclohydrolase II structure and mechanism.</title>
        <authorList>
            <person name="Ren J."/>
            <person name="Kotaka M."/>
            <person name="Lockyer M."/>
            <person name="Lamb H.K."/>
            <person name="Hawkins A.R."/>
            <person name="Stammers D.K."/>
        </authorList>
    </citation>
    <scope>X-RAY CRYSTALLOGRAPHY (1.54 ANGSTROMS) OF APOENZYME AND IN COMPLEX WITH GTP ANALOG AND ZINC IONS</scope>
    <scope>REACTION MECHANISM</scope>
</reference>
<comment type="function">
    <text evidence="5">Catalyzes the conversion of GTP to 2,5-diamino-6-ribosylamino-4(3H)-pyrimidinone 5'-phosphate (DARP), formate and pyrophosphate.</text>
</comment>
<comment type="catalytic activity">
    <reaction evidence="6">
        <text>GTP + 4 H2O = 2,5-diamino-6-hydroxy-4-(5-phosphoribosylamino)-pyrimidine + formate + 2 phosphate + 3 H(+)</text>
        <dbReference type="Rhea" id="RHEA:23704"/>
        <dbReference type="ChEBI" id="CHEBI:15377"/>
        <dbReference type="ChEBI" id="CHEBI:15378"/>
        <dbReference type="ChEBI" id="CHEBI:15740"/>
        <dbReference type="ChEBI" id="CHEBI:37565"/>
        <dbReference type="ChEBI" id="CHEBI:43474"/>
        <dbReference type="ChEBI" id="CHEBI:58614"/>
        <dbReference type="EC" id="3.5.4.25"/>
    </reaction>
</comment>
<comment type="cofactor">
    <cofactor evidence="3 5">
        <name>Zn(2+)</name>
        <dbReference type="ChEBI" id="CHEBI:29105"/>
    </cofactor>
    <text evidence="3 5">Binds 1 zinc ion per subunit.</text>
</comment>
<comment type="activity regulation">
    <text evidence="2 5">Competitively inhibited by pyrophosphate.</text>
</comment>
<comment type="biophysicochemical properties">
    <kinetics>
        <KM evidence="5">41 uM for GTP</KM>
    </kinetics>
    <phDependence>
        <text evidence="5">Optimum pH is 8.5.</text>
    </phDependence>
</comment>
<comment type="pathway">
    <text>Cofactor biosynthesis; riboflavin biosynthesis; 5-amino-6-(D-ribitylamino)uracil from GTP: step 1/4.</text>
</comment>
<comment type="subunit">
    <text evidence="4 5">Homodimer.</text>
</comment>
<comment type="interaction">
    <interactant intactId="EBI-1123314">
        <id>P0A7I7</id>
    </interactant>
    <interactant intactId="EBI-1123202">
        <id>P08244</id>
        <label>pyrF</label>
    </interactant>
    <organismsDiffer>false</organismsDiffer>
    <experiments>2</experiments>
</comment>
<comment type="miscellaneous">
    <text>Catalyzes the formation of GMP as minor product, with concomitant release of pyrophosphate. Release of pyrophosphate requires magnesium ions.</text>
</comment>
<comment type="similarity">
    <text evidence="7">Belongs to the GTP cyclohydrolase II family.</text>
</comment>
<protein>
    <recommendedName>
        <fullName>GTP cyclohydrolase-2</fullName>
        <ecNumber evidence="6">3.5.4.25</ecNumber>
    </recommendedName>
    <alternativeName>
        <fullName>GTP cyclohydrolase II</fullName>
    </alternativeName>
</protein>
<organism>
    <name type="scientific">Escherichia coli (strain K12)</name>
    <dbReference type="NCBI Taxonomy" id="83333"/>
    <lineage>
        <taxon>Bacteria</taxon>
        <taxon>Pseudomonadati</taxon>
        <taxon>Pseudomonadota</taxon>
        <taxon>Gammaproteobacteria</taxon>
        <taxon>Enterobacterales</taxon>
        <taxon>Enterobacteriaceae</taxon>
        <taxon>Escherichia</taxon>
    </lineage>
</organism>
<gene>
    <name type="primary">ribA</name>
    <name type="ordered locus">b1277</name>
    <name type="ordered locus">JW1269</name>
</gene>
<sequence>MQLKRVAEAKLPTPWGDFLMVGFEELATGHDHVALVYGDISGHTPVLARVHSECLTGDALFSLRCDCGFQLEAALTQIAEEGRGILLYHRQEGRNIGLLNKIRAYALQDQGYDTVEANHQLGFAADERDFTLCADMFKLLGVNEVRLLTNNPKKVEILTEAGINIVERVPLIVGRNPNNEHYLDTKAEKMGHLLNK</sequence>
<keyword id="KW-0002">3D-structure</keyword>
<keyword id="KW-0903">Direct protein sequencing</keyword>
<keyword id="KW-0342">GTP-binding</keyword>
<keyword id="KW-0378">Hydrolase</keyword>
<keyword id="KW-0479">Metal-binding</keyword>
<keyword id="KW-0547">Nucleotide-binding</keyword>
<keyword id="KW-1185">Reference proteome</keyword>
<keyword id="KW-0686">Riboflavin biosynthesis</keyword>
<keyword id="KW-0862">Zinc</keyword>
<accession>P0A7I7</accession>
<accession>P25523</accession>
<accession>P78147</accession>